<keyword id="KW-0413">Isomerase</keyword>
<keyword id="KW-1185">Reference proteome</keyword>
<keyword id="KW-0819">tRNA processing</keyword>
<name>TRUB_SYNC1</name>
<reference key="1">
    <citation type="submission" date="2005-10" db="EMBL/GenBank/DDBJ databases">
        <title>Complete sequence of Pelobacter carbinolicus DSM 2380.</title>
        <authorList>
            <person name="Copeland A."/>
            <person name="Lucas S."/>
            <person name="Lapidus A."/>
            <person name="Barry K."/>
            <person name="Detter J.C."/>
            <person name="Glavina T."/>
            <person name="Hammon N."/>
            <person name="Israni S."/>
            <person name="Pitluck S."/>
            <person name="Chertkov O."/>
            <person name="Schmutz J."/>
            <person name="Larimer F."/>
            <person name="Land M."/>
            <person name="Kyrpides N."/>
            <person name="Ivanova N."/>
            <person name="Richardson P."/>
        </authorList>
    </citation>
    <scope>NUCLEOTIDE SEQUENCE [LARGE SCALE GENOMIC DNA]</scope>
    <source>
        <strain>DSM 2380 / NBRC 103641 / GraBd1</strain>
    </source>
</reference>
<comment type="function">
    <text evidence="1">Responsible for synthesis of pseudouridine from uracil-55 in the psi GC loop of transfer RNAs.</text>
</comment>
<comment type="catalytic activity">
    <reaction evidence="1">
        <text>uridine(55) in tRNA = pseudouridine(55) in tRNA</text>
        <dbReference type="Rhea" id="RHEA:42532"/>
        <dbReference type="Rhea" id="RHEA-COMP:10101"/>
        <dbReference type="Rhea" id="RHEA-COMP:10102"/>
        <dbReference type="ChEBI" id="CHEBI:65314"/>
        <dbReference type="ChEBI" id="CHEBI:65315"/>
        <dbReference type="EC" id="5.4.99.25"/>
    </reaction>
</comment>
<comment type="similarity">
    <text evidence="1">Belongs to the pseudouridine synthase TruB family. Type 1 subfamily.</text>
</comment>
<proteinExistence type="inferred from homology"/>
<evidence type="ECO:0000255" key="1">
    <source>
        <dbReference type="HAMAP-Rule" id="MF_01080"/>
    </source>
</evidence>
<gene>
    <name evidence="1" type="primary">truB</name>
    <name type="ordered locus">Pcar_1559</name>
</gene>
<organism>
    <name type="scientific">Syntrophotalea carbinolica (strain DSM 2380 / NBRC 103641 / GraBd1)</name>
    <name type="common">Pelobacter carbinolicus</name>
    <dbReference type="NCBI Taxonomy" id="338963"/>
    <lineage>
        <taxon>Bacteria</taxon>
        <taxon>Pseudomonadati</taxon>
        <taxon>Thermodesulfobacteriota</taxon>
        <taxon>Desulfuromonadia</taxon>
        <taxon>Desulfuromonadales</taxon>
        <taxon>Syntrophotaleaceae</taxon>
        <taxon>Syntrophotalea</taxon>
    </lineage>
</organism>
<dbReference type="EC" id="5.4.99.25" evidence="1"/>
<dbReference type="EMBL" id="CP000142">
    <property type="protein sequence ID" value="ABA88804.1"/>
    <property type="molecule type" value="Genomic_DNA"/>
</dbReference>
<dbReference type="RefSeq" id="WP_011341287.1">
    <property type="nucleotide sequence ID" value="NC_007498.2"/>
</dbReference>
<dbReference type="SMR" id="Q3A4A3"/>
<dbReference type="STRING" id="338963.Pcar_1559"/>
<dbReference type="KEGG" id="pca:Pcar_1559"/>
<dbReference type="eggNOG" id="COG0130">
    <property type="taxonomic scope" value="Bacteria"/>
</dbReference>
<dbReference type="HOGENOM" id="CLU_032087_0_1_7"/>
<dbReference type="OrthoDB" id="9802309at2"/>
<dbReference type="Proteomes" id="UP000002534">
    <property type="component" value="Chromosome"/>
</dbReference>
<dbReference type="GO" id="GO:0003723">
    <property type="term" value="F:RNA binding"/>
    <property type="evidence" value="ECO:0007669"/>
    <property type="project" value="InterPro"/>
</dbReference>
<dbReference type="GO" id="GO:0160148">
    <property type="term" value="F:tRNA pseudouridine(55) synthase activity"/>
    <property type="evidence" value="ECO:0007669"/>
    <property type="project" value="UniProtKB-EC"/>
</dbReference>
<dbReference type="GO" id="GO:1990481">
    <property type="term" value="P:mRNA pseudouridine synthesis"/>
    <property type="evidence" value="ECO:0007669"/>
    <property type="project" value="TreeGrafter"/>
</dbReference>
<dbReference type="GO" id="GO:0031119">
    <property type="term" value="P:tRNA pseudouridine synthesis"/>
    <property type="evidence" value="ECO:0007669"/>
    <property type="project" value="UniProtKB-UniRule"/>
</dbReference>
<dbReference type="CDD" id="cd02573">
    <property type="entry name" value="PseudoU_synth_EcTruB"/>
    <property type="match status" value="1"/>
</dbReference>
<dbReference type="FunFam" id="3.30.2350.10:FF:000011">
    <property type="entry name" value="tRNA pseudouridine synthase B"/>
    <property type="match status" value="1"/>
</dbReference>
<dbReference type="Gene3D" id="3.30.2350.10">
    <property type="entry name" value="Pseudouridine synthase"/>
    <property type="match status" value="1"/>
</dbReference>
<dbReference type="HAMAP" id="MF_01080">
    <property type="entry name" value="TruB_bact"/>
    <property type="match status" value="1"/>
</dbReference>
<dbReference type="InterPro" id="IPR020103">
    <property type="entry name" value="PsdUridine_synth_cat_dom_sf"/>
</dbReference>
<dbReference type="InterPro" id="IPR002501">
    <property type="entry name" value="PsdUridine_synth_N"/>
</dbReference>
<dbReference type="InterPro" id="IPR014780">
    <property type="entry name" value="tRNA_psdUridine_synth_TruB"/>
</dbReference>
<dbReference type="InterPro" id="IPR032819">
    <property type="entry name" value="TruB_C"/>
</dbReference>
<dbReference type="NCBIfam" id="TIGR00431">
    <property type="entry name" value="TruB"/>
    <property type="match status" value="1"/>
</dbReference>
<dbReference type="PANTHER" id="PTHR13767:SF2">
    <property type="entry name" value="PSEUDOURIDYLATE SYNTHASE TRUB1"/>
    <property type="match status" value="1"/>
</dbReference>
<dbReference type="PANTHER" id="PTHR13767">
    <property type="entry name" value="TRNA-PSEUDOURIDINE SYNTHASE"/>
    <property type="match status" value="1"/>
</dbReference>
<dbReference type="Pfam" id="PF16198">
    <property type="entry name" value="TruB_C_2"/>
    <property type="match status" value="1"/>
</dbReference>
<dbReference type="Pfam" id="PF01509">
    <property type="entry name" value="TruB_N"/>
    <property type="match status" value="1"/>
</dbReference>
<dbReference type="SUPFAM" id="SSF55120">
    <property type="entry name" value="Pseudouridine synthase"/>
    <property type="match status" value="1"/>
</dbReference>
<accession>Q3A4A3</accession>
<protein>
    <recommendedName>
        <fullName evidence="1">tRNA pseudouridine synthase B</fullName>
        <ecNumber evidence="1">5.4.99.25</ecNumber>
    </recommendedName>
    <alternativeName>
        <fullName evidence="1">tRNA pseudouridine(55) synthase</fullName>
        <shortName evidence="1">Psi55 synthase</shortName>
    </alternativeName>
    <alternativeName>
        <fullName evidence="1">tRNA pseudouridylate synthase</fullName>
    </alternativeName>
    <alternativeName>
        <fullName evidence="1">tRNA-uridine isomerase</fullName>
    </alternativeName>
</protein>
<sequence>MNGILIVDKPQGMTSHAVVGRIRRLFGLRKVGHAGTLDPLATGVLVVALGQATRILQFLMQENKVYRASLVLGKTTDTQDSEGQIVATSDPGHIDAQSVADVCHSMVGSYDQMPPMYSALKKDGVPLYKLARQGVEVSRKPRRITIFDLQLLAVEPPNITFDVHCSKGTYVRTICHDIGVKLGCGAHLTALRRLRSAPFDVKEAVTLEAIELMAPEDRPELLLSIAEALREYPSLNVCPEGIKRLGYGIPPTADMIADTIDFEEGTQVLLVGPGGALAMATYVPSRARESRGDFELLRVFNDGGSS</sequence>
<feature type="chain" id="PRO_0000229366" description="tRNA pseudouridine synthase B">
    <location>
        <begin position="1"/>
        <end position="306"/>
    </location>
</feature>
<feature type="active site" description="Nucleophile" evidence="1">
    <location>
        <position position="38"/>
    </location>
</feature>